<protein>
    <recommendedName>
        <fullName>LIM domain-containing protein 1</fullName>
    </recommendedName>
</protein>
<dbReference type="EMBL" id="CR760537">
    <property type="protein sequence ID" value="CAJ81256.1"/>
    <property type="molecule type" value="mRNA"/>
</dbReference>
<dbReference type="EMBL" id="BC171270">
    <property type="protein sequence ID" value="AAI71270.1"/>
    <property type="molecule type" value="mRNA"/>
</dbReference>
<dbReference type="RefSeq" id="NP_001016606.1">
    <property type="nucleotide sequence ID" value="NM_001016606.2"/>
</dbReference>
<dbReference type="RefSeq" id="XP_012820161.2">
    <property type="nucleotide sequence ID" value="XM_012964707.3"/>
</dbReference>
<dbReference type="RefSeq" id="XP_012820162.2">
    <property type="nucleotide sequence ID" value="XM_012964708.3"/>
</dbReference>
<dbReference type="RefSeq" id="XP_012820163.2">
    <property type="nucleotide sequence ID" value="XM_012964709.3"/>
</dbReference>
<dbReference type="FunCoup" id="B7ZUL2">
    <property type="interactions" value="1007"/>
</dbReference>
<dbReference type="STRING" id="8364.ENSXETP00000024844"/>
<dbReference type="PaxDb" id="8364-ENSXETP00000058624"/>
<dbReference type="GeneID" id="549360"/>
<dbReference type="KEGG" id="xtr:549360"/>
<dbReference type="AGR" id="Xenbase:XB-GENE-1017238"/>
<dbReference type="CTD" id="8994"/>
<dbReference type="Xenbase" id="XB-GENE-1017238">
    <property type="gene designation" value="limd1"/>
</dbReference>
<dbReference type="eggNOG" id="KOG1701">
    <property type="taxonomic scope" value="Eukaryota"/>
</dbReference>
<dbReference type="InParanoid" id="B7ZUL2"/>
<dbReference type="OMA" id="CECCALE"/>
<dbReference type="OrthoDB" id="25414at2759"/>
<dbReference type="Reactome" id="R-XTR-1234176">
    <property type="pathway name" value="Oxygen-dependent proline hydroxylation of Hypoxia-inducible Factor Alpha"/>
</dbReference>
<dbReference type="Proteomes" id="UP000008143">
    <property type="component" value="Chromosome 6"/>
</dbReference>
<dbReference type="Bgee" id="ENSXETG00000031781">
    <property type="expression patterns" value="Expressed in egg cell and 11 other cell types or tissues"/>
</dbReference>
<dbReference type="GO" id="GO:0005737">
    <property type="term" value="C:cytoplasm"/>
    <property type="evidence" value="ECO:0007669"/>
    <property type="project" value="UniProtKB-SubCell"/>
</dbReference>
<dbReference type="GO" id="GO:0005634">
    <property type="term" value="C:nucleus"/>
    <property type="evidence" value="ECO:0007669"/>
    <property type="project" value="UniProtKB-SubCell"/>
</dbReference>
<dbReference type="GO" id="GO:0046872">
    <property type="term" value="F:metal ion binding"/>
    <property type="evidence" value="ECO:0007669"/>
    <property type="project" value="UniProtKB-KW"/>
</dbReference>
<dbReference type="GO" id="GO:0003714">
    <property type="term" value="F:transcription corepressor activity"/>
    <property type="evidence" value="ECO:0000250"/>
    <property type="project" value="UniProtKB"/>
</dbReference>
<dbReference type="GO" id="GO:0014032">
    <property type="term" value="P:neural crest cell development"/>
    <property type="evidence" value="ECO:0000250"/>
    <property type="project" value="UniProtKB"/>
</dbReference>
<dbReference type="CDD" id="cd09352">
    <property type="entry name" value="LIM1_Ajuba_like"/>
    <property type="match status" value="1"/>
</dbReference>
<dbReference type="CDD" id="cd09355">
    <property type="entry name" value="LIM2_Ajuba_like"/>
    <property type="match status" value="1"/>
</dbReference>
<dbReference type="CDD" id="cd09438">
    <property type="entry name" value="LIM3_Ajuba_like"/>
    <property type="match status" value="1"/>
</dbReference>
<dbReference type="FunFam" id="2.10.110.10:FF:000028">
    <property type="entry name" value="LIM domain-containing protein 1"/>
    <property type="match status" value="1"/>
</dbReference>
<dbReference type="FunFam" id="2.10.110.10:FF:000036">
    <property type="entry name" value="LIM domain-containing protein 1"/>
    <property type="match status" value="1"/>
</dbReference>
<dbReference type="FunFam" id="2.10.110.10:FF:000037">
    <property type="entry name" value="LIM domain-containing protein 1"/>
    <property type="match status" value="1"/>
</dbReference>
<dbReference type="Gene3D" id="2.10.110.10">
    <property type="entry name" value="Cysteine Rich Protein"/>
    <property type="match status" value="3"/>
</dbReference>
<dbReference type="InterPro" id="IPR047172">
    <property type="entry name" value="Ajuba-like"/>
</dbReference>
<dbReference type="InterPro" id="IPR047245">
    <property type="entry name" value="Ajuba-like_LIM1"/>
</dbReference>
<dbReference type="InterPro" id="IPR047247">
    <property type="entry name" value="Ajuba-like_LIM2"/>
</dbReference>
<dbReference type="InterPro" id="IPR047248">
    <property type="entry name" value="Ajuba-like_LIM3"/>
</dbReference>
<dbReference type="InterPro" id="IPR001781">
    <property type="entry name" value="Znf_LIM"/>
</dbReference>
<dbReference type="PANTHER" id="PTHR24219:SF3">
    <property type="entry name" value="LIM DOMAIN-CONTAINING PROTEIN 1"/>
    <property type="match status" value="1"/>
</dbReference>
<dbReference type="PANTHER" id="PTHR24219">
    <property type="entry name" value="LIM DOMAIN-CONTAINING PROTEIN JUB"/>
    <property type="match status" value="1"/>
</dbReference>
<dbReference type="Pfam" id="PF00412">
    <property type="entry name" value="LIM"/>
    <property type="match status" value="3"/>
</dbReference>
<dbReference type="SMART" id="SM00132">
    <property type="entry name" value="LIM"/>
    <property type="match status" value="3"/>
</dbReference>
<dbReference type="SUPFAM" id="SSF57716">
    <property type="entry name" value="Glucocorticoid receptor-like (DNA-binding domain)"/>
    <property type="match status" value="2"/>
</dbReference>
<dbReference type="PROSITE" id="PS00478">
    <property type="entry name" value="LIM_DOMAIN_1"/>
    <property type="match status" value="2"/>
</dbReference>
<dbReference type="PROSITE" id="PS50023">
    <property type="entry name" value="LIM_DOMAIN_2"/>
    <property type="match status" value="3"/>
</dbReference>
<keyword id="KW-0963">Cytoplasm</keyword>
<keyword id="KW-0440">LIM domain</keyword>
<keyword id="KW-0479">Metal-binding</keyword>
<keyword id="KW-0539">Nucleus</keyword>
<keyword id="KW-1185">Reference proteome</keyword>
<keyword id="KW-0677">Repeat</keyword>
<keyword id="KW-0678">Repressor</keyword>
<keyword id="KW-0804">Transcription</keyword>
<keyword id="KW-0805">Transcription regulation</keyword>
<keyword id="KW-0862">Zinc</keyword>
<comment type="function">
    <text evidence="1">Acts as a transcriptional corepressor for snai1 and snai2/slug and plays a role in regulating neural crest development.</text>
</comment>
<comment type="subunit">
    <text evidence="1">Interacts with snai1.</text>
</comment>
<comment type="subcellular location">
    <subcellularLocation>
        <location evidence="4">Cytoplasm</location>
    </subcellularLocation>
    <subcellularLocation>
        <location evidence="4">Nucleus</location>
    </subcellularLocation>
</comment>
<comment type="similarity">
    <text evidence="4">Belongs to the zyxin/ajuba family.</text>
</comment>
<name>LIMD1_XENTR</name>
<gene>
    <name type="primary">limd1</name>
    <name type="ORF">TEgg075f13</name>
</gene>
<reference key="1">
    <citation type="submission" date="2005-07" db="EMBL/GenBank/DDBJ databases">
        <authorList>
            <consortium name="Sanger Xenopus tropicalis EST/cDNA project"/>
        </authorList>
    </citation>
    <scope>NUCLEOTIDE SEQUENCE [LARGE SCALE MRNA]</scope>
    <source>
        <tissue>Egg</tissue>
    </source>
</reference>
<reference key="2">
    <citation type="submission" date="2008-11" db="EMBL/GenBank/DDBJ databases">
        <authorList>
            <consortium name="NIH - Xenopus Gene Collection (XGC) project"/>
        </authorList>
    </citation>
    <scope>NUCLEOTIDE SEQUENCE [LARGE SCALE MRNA]</scope>
    <source>
        <tissue>Neurula</tissue>
    </source>
</reference>
<sequence>MDTYEELSLEASKFIQDLTLYEASKDGLFRVDKGASNNPEFEETKRIFAAKMAKIHLQNQQKNIPDTGTSEGNGSNLQYTYSMPKSVEEVPVTYNGQSSSSVGQSDYKTYRESYKVKPEIDSADSSEEPVIRHEHETMLLSPVSKVGHAIPSQQFTCKKAISPSNESLERERIGSENMHSDLNLSSMINCKPMEKNTPHNKCSPLISSSVIFGEETNTHIPQQKFFNLSSPSSINLQKTSDHVCLSETKAAKEFNGEQRGFCSTNSLNSGSSNDVKLSALSSYCVGYNENSSDQIKQMQAPCYTFNSGHSSADEQPQEIPFSCTDSSAEPPASTLDSDHIDIVQDSSTLMKIKLPCQTLSQSSKQGSSRAEKKLEAITRHLEQEMDAHTRADYFGTCVKCSKGVYGANQACQAMGNLYHNGCFICSACSRKLRGKAFYFVNGKVYCEEDFLYSGFHQSADRCFVCGHWIMDMILQALGKSFHPGCFRCAVCNECLDGVPFTVDMENKIYCVKDYHKILAPKCAACSLPILPSEGTDETIRVVSMDKDYHIDCYRCESCALELNNEDDHRCYPLEGHLFCHNCHLKYLENHNLS</sequence>
<feature type="chain" id="PRO_0000416963" description="LIM domain-containing protein 1">
    <location>
        <begin position="1"/>
        <end position="593"/>
    </location>
</feature>
<feature type="domain" description="LIM zinc-binding 1" evidence="2">
    <location>
        <begin position="395"/>
        <end position="456"/>
    </location>
</feature>
<feature type="domain" description="LIM zinc-binding 2" evidence="2">
    <location>
        <begin position="460"/>
        <end position="520"/>
    </location>
</feature>
<feature type="domain" description="LIM zinc-binding 3" evidence="2">
    <location>
        <begin position="521"/>
        <end position="589"/>
    </location>
</feature>
<feature type="region of interest" description="Disordered" evidence="3">
    <location>
        <begin position="308"/>
        <end position="336"/>
    </location>
</feature>
<feature type="sequence conflict" description="In Ref. 1; CAJ81256." evidence="4" ref="1">
    <original>T</original>
    <variation>I</variation>
    <location>
        <position position="137"/>
    </location>
</feature>
<organism>
    <name type="scientific">Xenopus tropicalis</name>
    <name type="common">Western clawed frog</name>
    <name type="synonym">Silurana tropicalis</name>
    <dbReference type="NCBI Taxonomy" id="8364"/>
    <lineage>
        <taxon>Eukaryota</taxon>
        <taxon>Metazoa</taxon>
        <taxon>Chordata</taxon>
        <taxon>Craniata</taxon>
        <taxon>Vertebrata</taxon>
        <taxon>Euteleostomi</taxon>
        <taxon>Amphibia</taxon>
        <taxon>Batrachia</taxon>
        <taxon>Anura</taxon>
        <taxon>Pipoidea</taxon>
        <taxon>Pipidae</taxon>
        <taxon>Xenopodinae</taxon>
        <taxon>Xenopus</taxon>
        <taxon>Silurana</taxon>
    </lineage>
</organism>
<proteinExistence type="evidence at transcript level"/>
<accession>B7ZUL2</accession>
<accession>Q28I83</accession>
<evidence type="ECO:0000250" key="1"/>
<evidence type="ECO:0000255" key="2">
    <source>
        <dbReference type="PROSITE-ProRule" id="PRU00125"/>
    </source>
</evidence>
<evidence type="ECO:0000256" key="3">
    <source>
        <dbReference type="SAM" id="MobiDB-lite"/>
    </source>
</evidence>
<evidence type="ECO:0000305" key="4"/>